<organism>
    <name type="scientific">Saccharomyces cerevisiae (strain ATCC 204508 / S288c)</name>
    <name type="common">Baker's yeast</name>
    <dbReference type="NCBI Taxonomy" id="559292"/>
    <lineage>
        <taxon>Eukaryota</taxon>
        <taxon>Fungi</taxon>
        <taxon>Dikarya</taxon>
        <taxon>Ascomycota</taxon>
        <taxon>Saccharomycotina</taxon>
        <taxon>Saccharomycetes</taxon>
        <taxon>Saccharomycetales</taxon>
        <taxon>Saccharomycetaceae</taxon>
        <taxon>Saccharomyces</taxon>
    </lineage>
</organism>
<feature type="chain" id="PRO_0000247152" description="Uncharacterized protein YLL056C">
    <location>
        <begin position="1"/>
        <end position="298"/>
    </location>
</feature>
<evidence type="ECO:0000269" key="1">
    <source>
    </source>
</evidence>
<evidence type="ECO:0000305" key="2"/>
<dbReference type="EMBL" id="Z47973">
    <property type="protein sequence ID" value="CAA88001.1"/>
    <property type="molecule type" value="Genomic_DNA"/>
</dbReference>
<dbReference type="EMBL" id="Z73161">
    <property type="protein sequence ID" value="CAA97509.1"/>
    <property type="molecule type" value="Genomic_DNA"/>
</dbReference>
<dbReference type="EMBL" id="AY558193">
    <property type="protein sequence ID" value="AAS56519.1"/>
    <property type="molecule type" value="Genomic_DNA"/>
</dbReference>
<dbReference type="EMBL" id="BK006945">
    <property type="protein sequence ID" value="DAA09268.1"/>
    <property type="molecule type" value="Genomic_DNA"/>
</dbReference>
<dbReference type="PIR" id="S50964">
    <property type="entry name" value="S50964"/>
</dbReference>
<dbReference type="RefSeq" id="NP_013044.1">
    <property type="nucleotide sequence ID" value="NM_001181876.1"/>
</dbReference>
<dbReference type="SMR" id="Q12177"/>
<dbReference type="BioGRID" id="31259">
    <property type="interactions" value="51"/>
</dbReference>
<dbReference type="DIP" id="DIP-8912N"/>
<dbReference type="FunCoup" id="Q12177">
    <property type="interactions" value="49"/>
</dbReference>
<dbReference type="IntAct" id="Q12177">
    <property type="interactions" value="1"/>
</dbReference>
<dbReference type="STRING" id="4932.YLL056C"/>
<dbReference type="iPTMnet" id="Q12177"/>
<dbReference type="PaxDb" id="4932-YLL056C"/>
<dbReference type="PeptideAtlas" id="Q12177"/>
<dbReference type="EnsemblFungi" id="YLL056C_mRNA">
    <property type="protein sequence ID" value="YLL056C"/>
    <property type="gene ID" value="YLL056C"/>
</dbReference>
<dbReference type="GeneID" id="850670"/>
<dbReference type="KEGG" id="sce:YLL056C"/>
<dbReference type="AGR" id="SGD:S000003979"/>
<dbReference type="SGD" id="S000003979">
    <property type="gene designation" value="YLL056C"/>
</dbReference>
<dbReference type="VEuPathDB" id="FungiDB:YLL056C"/>
<dbReference type="eggNOG" id="KOG1502">
    <property type="taxonomic scope" value="Eukaryota"/>
</dbReference>
<dbReference type="HOGENOM" id="CLU_007383_12_3_1"/>
<dbReference type="InParanoid" id="Q12177"/>
<dbReference type="OMA" id="HTAFDHD"/>
<dbReference type="OrthoDB" id="10262413at2759"/>
<dbReference type="BioCyc" id="MetaCyc:G3O-32155-MONOMER"/>
<dbReference type="BioCyc" id="YEAST:G3O-32155-MONOMER"/>
<dbReference type="BioGRID-ORCS" id="850670">
    <property type="hits" value="7 hits in 10 CRISPR screens"/>
</dbReference>
<dbReference type="PRO" id="PR:Q12177"/>
<dbReference type="Proteomes" id="UP000002311">
    <property type="component" value="Chromosome XII"/>
</dbReference>
<dbReference type="RNAct" id="Q12177">
    <property type="molecule type" value="protein"/>
</dbReference>
<dbReference type="GO" id="GO:0005737">
    <property type="term" value="C:cytoplasm"/>
    <property type="evidence" value="ECO:0000314"/>
    <property type="project" value="SGD"/>
</dbReference>
<dbReference type="GO" id="GO:0004029">
    <property type="term" value="F:aldehyde dehydrogenase (NAD+) activity"/>
    <property type="evidence" value="ECO:0000314"/>
    <property type="project" value="SGD"/>
</dbReference>
<dbReference type="CDD" id="cd05262">
    <property type="entry name" value="SDR_a7"/>
    <property type="match status" value="1"/>
</dbReference>
<dbReference type="Gene3D" id="3.40.50.720">
    <property type="entry name" value="NAD(P)-binding Rossmann-like Domain"/>
    <property type="match status" value="1"/>
</dbReference>
<dbReference type="InterPro" id="IPR001509">
    <property type="entry name" value="Epimerase_deHydtase"/>
</dbReference>
<dbReference type="InterPro" id="IPR036291">
    <property type="entry name" value="NAD(P)-bd_dom_sf"/>
</dbReference>
<dbReference type="InterPro" id="IPR051783">
    <property type="entry name" value="NAD(P)-dependent_oxidoreduct"/>
</dbReference>
<dbReference type="PANTHER" id="PTHR48079">
    <property type="entry name" value="PROTEIN YEEZ"/>
    <property type="match status" value="1"/>
</dbReference>
<dbReference type="PANTHER" id="PTHR48079:SF9">
    <property type="entry name" value="PUTATIVE-RELATED"/>
    <property type="match status" value="1"/>
</dbReference>
<dbReference type="Pfam" id="PF01370">
    <property type="entry name" value="Epimerase"/>
    <property type="match status" value="1"/>
</dbReference>
<dbReference type="SUPFAM" id="SSF51735">
    <property type="entry name" value="NAD(P)-binding Rossmann-fold domains"/>
    <property type="match status" value="1"/>
</dbReference>
<protein>
    <recommendedName>
        <fullName>Uncharacterized protein YLL056C</fullName>
    </recommendedName>
</protein>
<proteinExistence type="evidence at transcript level"/>
<accession>Q12177</accession>
<accession>D6VXV2</accession>
<sequence>MKVFITGASGFIGSAVLSELISSGHEVVGLARSDEAAAKIKSIDPAAKILRGDLKDLEILKKGATESDGVIHLGFVHDFKNFEQCCEIDRQATVAMLESLKGSNKPFLYTNGTLSLRPNKVANEQDGIDEDSKILRAVTEQVALSYKDKGVSARIVRLPFSVHGKGDKAFVPILMNIAKAAGKSGYVGQGTNAWAAVHRLDTAPLFRLVLEKGKTGQVYHCVGEQGIPFKDIARVIGEILNVPVASIPVDDAESHFGFLTCFVTRDGPVSSEGTRKELGWQPQQIGLLEDIRANYSLN</sequence>
<keyword id="KW-1185">Reference proteome</keyword>
<gene>
    <name type="ordered locus">YLL056C</name>
    <name type="ORF">L0575</name>
</gene>
<reference key="1">
    <citation type="journal article" date="1997" name="Nature">
        <title>The nucleotide sequence of Saccharomyces cerevisiae chromosome XII.</title>
        <authorList>
            <person name="Johnston M."/>
            <person name="Hillier L.W."/>
            <person name="Riles L."/>
            <person name="Albermann K."/>
            <person name="Andre B."/>
            <person name="Ansorge W."/>
            <person name="Benes V."/>
            <person name="Brueckner M."/>
            <person name="Delius H."/>
            <person name="Dubois E."/>
            <person name="Duesterhoeft A."/>
            <person name="Entian K.-D."/>
            <person name="Floeth M."/>
            <person name="Goffeau A."/>
            <person name="Hebling U."/>
            <person name="Heumann K."/>
            <person name="Heuss-Neitzel D."/>
            <person name="Hilbert H."/>
            <person name="Hilger F."/>
            <person name="Kleine K."/>
            <person name="Koetter P."/>
            <person name="Louis E.J."/>
            <person name="Messenguy F."/>
            <person name="Mewes H.-W."/>
            <person name="Miosga T."/>
            <person name="Moestl D."/>
            <person name="Mueller-Auer S."/>
            <person name="Nentwich U."/>
            <person name="Obermaier B."/>
            <person name="Piravandi E."/>
            <person name="Pohl T.M."/>
            <person name="Portetelle D."/>
            <person name="Purnelle B."/>
            <person name="Rechmann S."/>
            <person name="Rieger M."/>
            <person name="Rinke M."/>
            <person name="Rose M."/>
            <person name="Scharfe M."/>
            <person name="Scherens B."/>
            <person name="Scholler P."/>
            <person name="Schwager C."/>
            <person name="Schwarz S."/>
            <person name="Underwood A.P."/>
            <person name="Urrestarazu L.A."/>
            <person name="Vandenbol M."/>
            <person name="Verhasselt P."/>
            <person name="Vierendeels F."/>
            <person name="Voet M."/>
            <person name="Volckaert G."/>
            <person name="Voss H."/>
            <person name="Wambutt R."/>
            <person name="Wedler E."/>
            <person name="Wedler H."/>
            <person name="Zimmermann F.K."/>
            <person name="Zollner A."/>
            <person name="Hani J."/>
            <person name="Hoheisel J.D."/>
        </authorList>
    </citation>
    <scope>NUCLEOTIDE SEQUENCE [LARGE SCALE GENOMIC DNA]</scope>
    <source>
        <strain>ATCC 204508 / S288c</strain>
    </source>
</reference>
<reference key="2">
    <citation type="journal article" date="2014" name="G3 (Bethesda)">
        <title>The reference genome sequence of Saccharomyces cerevisiae: Then and now.</title>
        <authorList>
            <person name="Engel S.R."/>
            <person name="Dietrich F.S."/>
            <person name="Fisk D.G."/>
            <person name="Binkley G."/>
            <person name="Balakrishnan R."/>
            <person name="Costanzo M.C."/>
            <person name="Dwight S.S."/>
            <person name="Hitz B.C."/>
            <person name="Karra K."/>
            <person name="Nash R.S."/>
            <person name="Weng S."/>
            <person name="Wong E.D."/>
            <person name="Lloyd P."/>
            <person name="Skrzypek M.S."/>
            <person name="Miyasato S.R."/>
            <person name="Simison M."/>
            <person name="Cherry J.M."/>
        </authorList>
    </citation>
    <scope>GENOME REANNOTATION</scope>
    <source>
        <strain>ATCC 204508 / S288c</strain>
    </source>
</reference>
<reference key="3">
    <citation type="journal article" date="2007" name="Genome Res.">
        <title>Approaching a complete repository of sequence-verified protein-encoding clones for Saccharomyces cerevisiae.</title>
        <authorList>
            <person name="Hu Y."/>
            <person name="Rolfs A."/>
            <person name="Bhullar B."/>
            <person name="Murthy T.V.S."/>
            <person name="Zhu C."/>
            <person name="Berger M.F."/>
            <person name="Camargo A.A."/>
            <person name="Kelley F."/>
            <person name="McCarron S."/>
            <person name="Jepson D."/>
            <person name="Richardson A."/>
            <person name="Raphael J."/>
            <person name="Moreira D."/>
            <person name="Taycher E."/>
            <person name="Zuo D."/>
            <person name="Mohr S."/>
            <person name="Kane M.F."/>
            <person name="Williamson J."/>
            <person name="Simpson A.J.G."/>
            <person name="Bulyk M.L."/>
            <person name="Harlow E."/>
            <person name="Marsischky G."/>
            <person name="Kolodner R.D."/>
            <person name="LaBaer J."/>
        </authorList>
    </citation>
    <scope>NUCLEOTIDE SEQUENCE [GENOMIC DNA]</scope>
    <source>
        <strain>ATCC 204508 / S288c</strain>
    </source>
</reference>
<reference key="4">
    <citation type="journal article" date="2001" name="Yeast">
        <title>Functional analysis of six novel ORFs on the left arm of chromosome XII of Saccharomyces cerevisiae reveals three of them responding to S-starvation.</title>
        <authorList>
            <person name="Zhang N."/>
            <person name="Merlotti C."/>
            <person name="Wu J."/>
            <person name="Ismail T."/>
            <person name="El-Moghazy A.-N."/>
            <person name="Khan S.A."/>
            <person name="Butt A."/>
            <person name="Gardner D.C.J."/>
            <person name="Sims P.F.G."/>
            <person name="Oliver S.G."/>
        </authorList>
    </citation>
    <scope>INDUCTION</scope>
</reference>
<comment type="induction">
    <text evidence="1">Highly induced under sulfur starvation conditions.</text>
</comment>
<comment type="similarity">
    <text evidence="2">Belongs to the NAD(P)-dependent epimerase/dehydratase family.</text>
</comment>
<name>YL056_YEAST</name>